<reference key="1">
    <citation type="journal article" date="2005" name="J. Bacteriol.">
        <title>Swine and poultry pathogens: the complete genome sequences of two strains of Mycoplasma hyopneumoniae and a strain of Mycoplasma synoviae.</title>
        <authorList>
            <person name="Vasconcelos A.T.R."/>
            <person name="Ferreira H.B."/>
            <person name="Bizarro C.V."/>
            <person name="Bonatto S.L."/>
            <person name="Carvalho M.O."/>
            <person name="Pinto P.M."/>
            <person name="Almeida D.F."/>
            <person name="Almeida L.G.P."/>
            <person name="Almeida R."/>
            <person name="Alves-Junior L."/>
            <person name="Assuncao E.N."/>
            <person name="Azevedo V.A.C."/>
            <person name="Bogo M.R."/>
            <person name="Brigido M.M."/>
            <person name="Brocchi M."/>
            <person name="Burity H.A."/>
            <person name="Camargo A.A."/>
            <person name="Camargo S.S."/>
            <person name="Carepo M.S."/>
            <person name="Carraro D.M."/>
            <person name="de Mattos Cascardo J.C."/>
            <person name="Castro L.A."/>
            <person name="Cavalcanti G."/>
            <person name="Chemale G."/>
            <person name="Collevatti R.G."/>
            <person name="Cunha C.W."/>
            <person name="Dallagiovanna B."/>
            <person name="Dambros B.P."/>
            <person name="Dellagostin O.A."/>
            <person name="Falcao C."/>
            <person name="Fantinatti-Garboggini F."/>
            <person name="Felipe M.S.S."/>
            <person name="Fiorentin L."/>
            <person name="Franco G.R."/>
            <person name="Freitas N.S.A."/>
            <person name="Frias D."/>
            <person name="Grangeiro T.B."/>
            <person name="Grisard E.C."/>
            <person name="Guimaraes C.T."/>
            <person name="Hungria M."/>
            <person name="Jardim S.N."/>
            <person name="Krieger M.A."/>
            <person name="Laurino J.P."/>
            <person name="Lima L.F.A."/>
            <person name="Lopes M.I."/>
            <person name="Loreto E.L.S."/>
            <person name="Madeira H.M.F."/>
            <person name="Manfio G.P."/>
            <person name="Maranhao A.Q."/>
            <person name="Martinkovics C.T."/>
            <person name="Medeiros S.R.B."/>
            <person name="Moreira M.A.M."/>
            <person name="Neiva M."/>
            <person name="Ramalho-Neto C.E."/>
            <person name="Nicolas M.F."/>
            <person name="Oliveira S.C."/>
            <person name="Paixao R.F.C."/>
            <person name="Pedrosa F.O."/>
            <person name="Pena S.D.J."/>
            <person name="Pereira M."/>
            <person name="Pereira-Ferrari L."/>
            <person name="Piffer I."/>
            <person name="Pinto L.S."/>
            <person name="Potrich D.P."/>
            <person name="Salim A.C.M."/>
            <person name="Santos F.R."/>
            <person name="Schmitt R."/>
            <person name="Schneider M.P.C."/>
            <person name="Schrank A."/>
            <person name="Schrank I.S."/>
            <person name="Schuck A.F."/>
            <person name="Seuanez H.N."/>
            <person name="Silva D.W."/>
            <person name="Silva R."/>
            <person name="Silva S.C."/>
            <person name="Soares C.M.A."/>
            <person name="Souza K.R.L."/>
            <person name="Souza R.C."/>
            <person name="Staats C.C."/>
            <person name="Steffens M.B.R."/>
            <person name="Teixeira S.M.R."/>
            <person name="Urmenyi T.P."/>
            <person name="Vainstein M.H."/>
            <person name="Zuccherato L.W."/>
            <person name="Simpson A.J.G."/>
            <person name="Zaha A."/>
        </authorList>
    </citation>
    <scope>NUCLEOTIDE SEQUENCE [LARGE SCALE GENOMIC DNA]</scope>
    <source>
        <strain>7448</strain>
    </source>
</reference>
<comment type="function">
    <text evidence="1">Binds 16S rRNA, required for the assembly of 30S particles and may also be responsible for determining the conformation of the 16S rRNA at the A site.</text>
</comment>
<comment type="cofactor">
    <cofactor evidence="1">
        <name>Zn(2+)</name>
        <dbReference type="ChEBI" id="CHEBI:29105"/>
    </cofactor>
    <text evidence="1">Binds 1 zinc ion per subunit.</text>
</comment>
<comment type="subunit">
    <text evidence="1">Part of the 30S ribosomal subunit. Contacts proteins S3 and S10.</text>
</comment>
<comment type="similarity">
    <text evidence="1">Belongs to the universal ribosomal protein uS14 family. Zinc-binding uS14 subfamily.</text>
</comment>
<sequence length="61" mass="7146">MAKTSWKVKANRAPKFKVRAYTRCQLCGRSHSVLRKFRICRICFRVLAHQGRIPGIKKASW</sequence>
<feature type="chain" id="PRO_0000269119" description="Small ribosomal subunit protein uS14">
    <location>
        <begin position="1"/>
        <end position="61"/>
    </location>
</feature>
<feature type="binding site" evidence="1">
    <location>
        <position position="24"/>
    </location>
    <ligand>
        <name>Zn(2+)</name>
        <dbReference type="ChEBI" id="CHEBI:29105"/>
    </ligand>
</feature>
<feature type="binding site" evidence="1">
    <location>
        <position position="27"/>
    </location>
    <ligand>
        <name>Zn(2+)</name>
        <dbReference type="ChEBI" id="CHEBI:29105"/>
    </ligand>
</feature>
<feature type="binding site" evidence="1">
    <location>
        <position position="40"/>
    </location>
    <ligand>
        <name>Zn(2+)</name>
        <dbReference type="ChEBI" id="CHEBI:29105"/>
    </ligand>
</feature>
<feature type="binding site" evidence="1">
    <location>
        <position position="43"/>
    </location>
    <ligand>
        <name>Zn(2+)</name>
        <dbReference type="ChEBI" id="CHEBI:29105"/>
    </ligand>
</feature>
<evidence type="ECO:0000255" key="1">
    <source>
        <dbReference type="HAMAP-Rule" id="MF_01364"/>
    </source>
</evidence>
<evidence type="ECO:0000305" key="2"/>
<organism>
    <name type="scientific">Mesomycoplasma hyopneumoniae (strain 7448)</name>
    <name type="common">Mycoplasma hyopneumoniae</name>
    <dbReference type="NCBI Taxonomy" id="262722"/>
    <lineage>
        <taxon>Bacteria</taxon>
        <taxon>Bacillati</taxon>
        <taxon>Mycoplasmatota</taxon>
        <taxon>Mycoplasmoidales</taxon>
        <taxon>Metamycoplasmataceae</taxon>
        <taxon>Mesomycoplasma</taxon>
    </lineage>
</organism>
<proteinExistence type="inferred from homology"/>
<dbReference type="EMBL" id="AE017244">
    <property type="protein sequence ID" value="AAZ53555.1"/>
    <property type="molecule type" value="Genomic_DNA"/>
</dbReference>
<dbReference type="RefSeq" id="WP_011206038.1">
    <property type="nucleotide sequence ID" value="NC_007332.1"/>
</dbReference>
<dbReference type="SMR" id="Q4A8I4"/>
<dbReference type="KEGG" id="mhp:MHP7448_0181"/>
<dbReference type="HOGENOM" id="CLU_139869_3_0_14"/>
<dbReference type="Proteomes" id="UP000000553">
    <property type="component" value="Chromosome"/>
</dbReference>
<dbReference type="GO" id="GO:0005737">
    <property type="term" value="C:cytoplasm"/>
    <property type="evidence" value="ECO:0007669"/>
    <property type="project" value="UniProtKB-ARBA"/>
</dbReference>
<dbReference type="GO" id="GO:0015935">
    <property type="term" value="C:small ribosomal subunit"/>
    <property type="evidence" value="ECO:0007669"/>
    <property type="project" value="TreeGrafter"/>
</dbReference>
<dbReference type="GO" id="GO:0019843">
    <property type="term" value="F:rRNA binding"/>
    <property type="evidence" value="ECO:0007669"/>
    <property type="project" value="UniProtKB-UniRule"/>
</dbReference>
<dbReference type="GO" id="GO:0003735">
    <property type="term" value="F:structural constituent of ribosome"/>
    <property type="evidence" value="ECO:0007669"/>
    <property type="project" value="InterPro"/>
</dbReference>
<dbReference type="GO" id="GO:0008270">
    <property type="term" value="F:zinc ion binding"/>
    <property type="evidence" value="ECO:0007669"/>
    <property type="project" value="UniProtKB-UniRule"/>
</dbReference>
<dbReference type="GO" id="GO:0006412">
    <property type="term" value="P:translation"/>
    <property type="evidence" value="ECO:0007669"/>
    <property type="project" value="UniProtKB-UniRule"/>
</dbReference>
<dbReference type="FunFam" id="4.10.830.10:FF:000001">
    <property type="entry name" value="30S ribosomal protein S14 type Z"/>
    <property type="match status" value="1"/>
</dbReference>
<dbReference type="Gene3D" id="4.10.830.10">
    <property type="entry name" value="30s Ribosomal Protein S14, Chain N"/>
    <property type="match status" value="1"/>
</dbReference>
<dbReference type="HAMAP" id="MF_01364_B">
    <property type="entry name" value="Ribosomal_uS14_2_B"/>
    <property type="match status" value="1"/>
</dbReference>
<dbReference type="InterPro" id="IPR001209">
    <property type="entry name" value="Ribosomal_uS14"/>
</dbReference>
<dbReference type="InterPro" id="IPR023053">
    <property type="entry name" value="Ribosomal_uS14_bact"/>
</dbReference>
<dbReference type="InterPro" id="IPR018271">
    <property type="entry name" value="Ribosomal_uS14_CS"/>
</dbReference>
<dbReference type="InterPro" id="IPR043140">
    <property type="entry name" value="Ribosomal_uS14_sf"/>
</dbReference>
<dbReference type="NCBIfam" id="NF005974">
    <property type="entry name" value="PRK08061.1"/>
    <property type="match status" value="1"/>
</dbReference>
<dbReference type="PANTHER" id="PTHR19836">
    <property type="entry name" value="30S RIBOSOMAL PROTEIN S14"/>
    <property type="match status" value="1"/>
</dbReference>
<dbReference type="PANTHER" id="PTHR19836:SF19">
    <property type="entry name" value="SMALL RIBOSOMAL SUBUNIT PROTEIN US14M"/>
    <property type="match status" value="1"/>
</dbReference>
<dbReference type="Pfam" id="PF00253">
    <property type="entry name" value="Ribosomal_S14"/>
    <property type="match status" value="1"/>
</dbReference>
<dbReference type="SUPFAM" id="SSF57716">
    <property type="entry name" value="Glucocorticoid receptor-like (DNA-binding domain)"/>
    <property type="match status" value="1"/>
</dbReference>
<dbReference type="PROSITE" id="PS00527">
    <property type="entry name" value="RIBOSOMAL_S14"/>
    <property type="match status" value="1"/>
</dbReference>
<name>RS14Z_MESH7</name>
<protein>
    <recommendedName>
        <fullName evidence="1">Small ribosomal subunit protein uS14</fullName>
    </recommendedName>
    <alternativeName>
        <fullName evidence="2">30S ribosomal protein S14 type Z</fullName>
    </alternativeName>
</protein>
<keyword id="KW-0479">Metal-binding</keyword>
<keyword id="KW-0687">Ribonucleoprotein</keyword>
<keyword id="KW-0689">Ribosomal protein</keyword>
<keyword id="KW-0694">RNA-binding</keyword>
<keyword id="KW-0699">rRNA-binding</keyword>
<keyword id="KW-0862">Zinc</keyword>
<gene>
    <name evidence="1" type="primary">rpsZ</name>
    <name evidence="1" type="synonym">rpsN</name>
    <name type="ordered locus">MHP7448_0181</name>
</gene>
<accession>Q4A8I4</accession>